<protein>
    <recommendedName>
        <fullName evidence="1">Malate dehydrogenase</fullName>
        <ecNumber evidence="1">1.1.1.37</ecNumber>
    </recommendedName>
</protein>
<reference key="1">
    <citation type="journal article" date="2006" name="J. Bacteriol.">
        <title>Complete genome sequence of Yersinia pestis strains Antiqua and Nepal516: evidence of gene reduction in an emerging pathogen.</title>
        <authorList>
            <person name="Chain P.S.G."/>
            <person name="Hu P."/>
            <person name="Malfatti S.A."/>
            <person name="Radnedge L."/>
            <person name="Larimer F."/>
            <person name="Vergez L.M."/>
            <person name="Worsham P."/>
            <person name="Chu M.C."/>
            <person name="Andersen G.L."/>
        </authorList>
    </citation>
    <scope>NUCLEOTIDE SEQUENCE [LARGE SCALE GENOMIC DNA]</scope>
    <source>
        <strain>Antiqua</strain>
    </source>
</reference>
<dbReference type="EC" id="1.1.1.37" evidence="1"/>
<dbReference type="EMBL" id="CP000308">
    <property type="protein sequence ID" value="ABG12035.1"/>
    <property type="molecule type" value="Genomic_DNA"/>
</dbReference>
<dbReference type="RefSeq" id="WP_002210174.1">
    <property type="nucleotide sequence ID" value="NZ_CP009906.1"/>
</dbReference>
<dbReference type="SMR" id="Q1CBY7"/>
<dbReference type="GeneID" id="57975198"/>
<dbReference type="KEGG" id="ypa:YPA_0066"/>
<dbReference type="Proteomes" id="UP000001971">
    <property type="component" value="Chromosome"/>
</dbReference>
<dbReference type="GO" id="GO:0005737">
    <property type="term" value="C:cytoplasm"/>
    <property type="evidence" value="ECO:0007669"/>
    <property type="project" value="TreeGrafter"/>
</dbReference>
<dbReference type="GO" id="GO:0030060">
    <property type="term" value="F:L-malate dehydrogenase (NAD+) activity"/>
    <property type="evidence" value="ECO:0007669"/>
    <property type="project" value="UniProtKB-UniRule"/>
</dbReference>
<dbReference type="GO" id="GO:0006108">
    <property type="term" value="P:malate metabolic process"/>
    <property type="evidence" value="ECO:0007669"/>
    <property type="project" value="InterPro"/>
</dbReference>
<dbReference type="GO" id="GO:0006099">
    <property type="term" value="P:tricarboxylic acid cycle"/>
    <property type="evidence" value="ECO:0007669"/>
    <property type="project" value="UniProtKB-UniRule"/>
</dbReference>
<dbReference type="CDD" id="cd01337">
    <property type="entry name" value="MDH_glyoxysomal_mitochondrial"/>
    <property type="match status" value="1"/>
</dbReference>
<dbReference type="FunFam" id="3.40.50.720:FF:000017">
    <property type="entry name" value="Malate dehydrogenase"/>
    <property type="match status" value="1"/>
</dbReference>
<dbReference type="FunFam" id="3.90.110.10:FF:000001">
    <property type="entry name" value="Malate dehydrogenase"/>
    <property type="match status" value="1"/>
</dbReference>
<dbReference type="Gene3D" id="3.90.110.10">
    <property type="entry name" value="Lactate dehydrogenase/glycoside hydrolase, family 4, C-terminal"/>
    <property type="match status" value="1"/>
</dbReference>
<dbReference type="Gene3D" id="3.40.50.720">
    <property type="entry name" value="NAD(P)-binding Rossmann-like Domain"/>
    <property type="match status" value="1"/>
</dbReference>
<dbReference type="HAMAP" id="MF_01516">
    <property type="entry name" value="Malate_dehydrog_1"/>
    <property type="match status" value="1"/>
</dbReference>
<dbReference type="InterPro" id="IPR001557">
    <property type="entry name" value="L-lactate/malate_DH"/>
</dbReference>
<dbReference type="InterPro" id="IPR022383">
    <property type="entry name" value="Lactate/malate_DH_C"/>
</dbReference>
<dbReference type="InterPro" id="IPR001236">
    <property type="entry name" value="Lactate/malate_DH_N"/>
</dbReference>
<dbReference type="InterPro" id="IPR015955">
    <property type="entry name" value="Lactate_DH/Glyco_Ohase_4_C"/>
</dbReference>
<dbReference type="InterPro" id="IPR001252">
    <property type="entry name" value="Malate_DH_AS"/>
</dbReference>
<dbReference type="InterPro" id="IPR010097">
    <property type="entry name" value="Malate_DH_type1"/>
</dbReference>
<dbReference type="InterPro" id="IPR023958">
    <property type="entry name" value="Malate_DH_type1_bac"/>
</dbReference>
<dbReference type="InterPro" id="IPR036291">
    <property type="entry name" value="NAD(P)-bd_dom_sf"/>
</dbReference>
<dbReference type="NCBIfam" id="TIGR01772">
    <property type="entry name" value="MDH_euk_gproteo"/>
    <property type="match status" value="1"/>
</dbReference>
<dbReference type="PANTHER" id="PTHR11540">
    <property type="entry name" value="MALATE AND LACTATE DEHYDROGENASE"/>
    <property type="match status" value="1"/>
</dbReference>
<dbReference type="PANTHER" id="PTHR11540:SF16">
    <property type="entry name" value="MALATE DEHYDROGENASE, MITOCHONDRIAL"/>
    <property type="match status" value="1"/>
</dbReference>
<dbReference type="Pfam" id="PF02866">
    <property type="entry name" value="Ldh_1_C"/>
    <property type="match status" value="1"/>
</dbReference>
<dbReference type="Pfam" id="PF00056">
    <property type="entry name" value="Ldh_1_N"/>
    <property type="match status" value="1"/>
</dbReference>
<dbReference type="PIRSF" id="PIRSF000102">
    <property type="entry name" value="Lac_mal_DH"/>
    <property type="match status" value="1"/>
</dbReference>
<dbReference type="SUPFAM" id="SSF56327">
    <property type="entry name" value="LDH C-terminal domain-like"/>
    <property type="match status" value="1"/>
</dbReference>
<dbReference type="SUPFAM" id="SSF51735">
    <property type="entry name" value="NAD(P)-binding Rossmann-fold domains"/>
    <property type="match status" value="1"/>
</dbReference>
<dbReference type="PROSITE" id="PS00068">
    <property type="entry name" value="MDH"/>
    <property type="match status" value="1"/>
</dbReference>
<comment type="function">
    <text evidence="1">Catalyzes the reversible oxidation of malate to oxaloacetate.</text>
</comment>
<comment type="catalytic activity">
    <reaction evidence="1">
        <text>(S)-malate + NAD(+) = oxaloacetate + NADH + H(+)</text>
        <dbReference type="Rhea" id="RHEA:21432"/>
        <dbReference type="ChEBI" id="CHEBI:15378"/>
        <dbReference type="ChEBI" id="CHEBI:15589"/>
        <dbReference type="ChEBI" id="CHEBI:16452"/>
        <dbReference type="ChEBI" id="CHEBI:57540"/>
        <dbReference type="ChEBI" id="CHEBI:57945"/>
        <dbReference type="EC" id="1.1.1.37"/>
    </reaction>
</comment>
<comment type="subunit">
    <text evidence="1">Homodimer.</text>
</comment>
<comment type="similarity">
    <text evidence="1">Belongs to the LDH/MDH superfamily. MDH type 1 family.</text>
</comment>
<gene>
    <name evidence="1" type="primary">mdh</name>
    <name type="ordered locus">YPA_0066</name>
</gene>
<name>MDH_YERPA</name>
<accession>Q1CBY7</accession>
<evidence type="ECO:0000255" key="1">
    <source>
        <dbReference type="HAMAP-Rule" id="MF_01516"/>
    </source>
</evidence>
<proteinExistence type="inferred from homology"/>
<sequence length="312" mass="32625">MKVAVLGAAGGIGQALALLLKTQLPSGSDLSLYDIAPVTPGVAVDLSHIPTAVNIKGFSGEDATPALQGADIVLISAGVARKPGMDRSDLFNVNAGIVRNLVEQIARTCPNALIGIITNPVNTTVAIAAEVLKKAGVYDKNKLFGITTLDTIRSNTFVAELKGKQPQDIEVPVIGGHSGVTILPLLSQIPGVSFTEQEVADLTKRIQNAGTEVVEAKAGGGSATLSMGQAAARFGLSLVRALQGESNVVECSYVEGDGKYARFFAQPILLGKNGVAERKDIGKLSAFEQQALENMLDVLHKDIELGEKFVNQ</sequence>
<organism>
    <name type="scientific">Yersinia pestis bv. Antiqua (strain Antiqua)</name>
    <dbReference type="NCBI Taxonomy" id="360102"/>
    <lineage>
        <taxon>Bacteria</taxon>
        <taxon>Pseudomonadati</taxon>
        <taxon>Pseudomonadota</taxon>
        <taxon>Gammaproteobacteria</taxon>
        <taxon>Enterobacterales</taxon>
        <taxon>Yersiniaceae</taxon>
        <taxon>Yersinia</taxon>
    </lineage>
</organism>
<keyword id="KW-0520">NAD</keyword>
<keyword id="KW-0560">Oxidoreductase</keyword>
<keyword id="KW-0816">Tricarboxylic acid cycle</keyword>
<feature type="chain" id="PRO_0000294313" description="Malate dehydrogenase">
    <location>
        <begin position="1"/>
        <end position="312"/>
    </location>
</feature>
<feature type="active site" description="Proton acceptor" evidence="1">
    <location>
        <position position="177"/>
    </location>
</feature>
<feature type="binding site" evidence="1">
    <location>
        <begin position="7"/>
        <end position="13"/>
    </location>
    <ligand>
        <name>NAD(+)</name>
        <dbReference type="ChEBI" id="CHEBI:57540"/>
    </ligand>
</feature>
<feature type="binding site" evidence="1">
    <location>
        <position position="34"/>
    </location>
    <ligand>
        <name>NAD(+)</name>
        <dbReference type="ChEBI" id="CHEBI:57540"/>
    </ligand>
</feature>
<feature type="binding site" evidence="1">
    <location>
        <position position="81"/>
    </location>
    <ligand>
        <name>substrate</name>
    </ligand>
</feature>
<feature type="binding site" evidence="1">
    <location>
        <position position="87"/>
    </location>
    <ligand>
        <name>substrate</name>
    </ligand>
</feature>
<feature type="binding site" evidence="1">
    <location>
        <position position="94"/>
    </location>
    <ligand>
        <name>NAD(+)</name>
        <dbReference type="ChEBI" id="CHEBI:57540"/>
    </ligand>
</feature>
<feature type="binding site" evidence="1">
    <location>
        <begin position="117"/>
        <end position="119"/>
    </location>
    <ligand>
        <name>NAD(+)</name>
        <dbReference type="ChEBI" id="CHEBI:57540"/>
    </ligand>
</feature>
<feature type="binding site" evidence="1">
    <location>
        <position position="119"/>
    </location>
    <ligand>
        <name>substrate</name>
    </ligand>
</feature>
<feature type="binding site" evidence="1">
    <location>
        <position position="153"/>
    </location>
    <ligand>
        <name>substrate</name>
    </ligand>
</feature>
<feature type="binding site" evidence="1">
    <location>
        <position position="227"/>
    </location>
    <ligand>
        <name>NAD(+)</name>
        <dbReference type="ChEBI" id="CHEBI:57540"/>
    </ligand>
</feature>